<evidence type="ECO:0000250" key="1"/>
<evidence type="ECO:0000255" key="2"/>
<evidence type="ECO:0000305" key="3"/>
<gene>
    <name type="primary">Cp15</name>
    <name type="synonym">S15</name>
    <name type="ORF">GJ13067</name>
</gene>
<protein>
    <recommendedName>
        <fullName>Chorion protein S15</fullName>
    </recommendedName>
</protein>
<accession>P13424</accession>
<accession>B4LEM8</accession>
<comment type="function">
    <text evidence="1">Chorion membrane (egg shell) protein; plays a role in protecting the egg from the environment.</text>
</comment>
<comment type="subcellular location">
    <subcellularLocation>
        <location evidence="1">Secreted</location>
    </subcellularLocation>
</comment>
<comment type="similarity">
    <text evidence="3">Belongs to the chorion protein S15/S18 family.</text>
</comment>
<organism>
    <name type="scientific">Drosophila virilis</name>
    <name type="common">Fruit fly</name>
    <dbReference type="NCBI Taxonomy" id="7244"/>
    <lineage>
        <taxon>Eukaryota</taxon>
        <taxon>Metazoa</taxon>
        <taxon>Ecdysozoa</taxon>
        <taxon>Arthropoda</taxon>
        <taxon>Hexapoda</taxon>
        <taxon>Insecta</taxon>
        <taxon>Pterygota</taxon>
        <taxon>Neoptera</taxon>
        <taxon>Endopterygota</taxon>
        <taxon>Diptera</taxon>
        <taxon>Brachycera</taxon>
        <taxon>Muscomorpha</taxon>
        <taxon>Ephydroidea</taxon>
        <taxon>Drosophilidae</taxon>
        <taxon>Drosophila</taxon>
    </lineage>
</organism>
<keyword id="KW-1185">Reference proteome</keyword>
<keyword id="KW-0964">Secreted</keyword>
<keyword id="KW-0732">Signal</keyword>
<name>CH15_DROVI</name>
<reference key="1">
    <citation type="journal article" date="1988" name="Genetics">
        <title>Evolution of the autosomal chorion locus in Drosophila. I. General organization of the locus and sequence comparisons of genes s15 and s19 in evolutionary distant species.</title>
        <authorList>
            <person name="Martinez-Cruzado J.C."/>
            <person name="Swimmer C."/>
            <person name="Fenerjian M.G."/>
            <person name="Kafatos F.C."/>
        </authorList>
    </citation>
    <scope>NUCLEOTIDE SEQUENCE [GENOMIC DNA]</scope>
</reference>
<reference key="2">
    <citation type="journal article" date="2007" name="Nature">
        <title>Evolution of genes and genomes on the Drosophila phylogeny.</title>
        <authorList>
            <consortium name="Drosophila 12 genomes consortium"/>
        </authorList>
    </citation>
    <scope>NUCLEOTIDE SEQUENCE [LARGE SCALE GENOMIC DNA]</scope>
    <source>
        <strain>Tucson 15010-1051.87</strain>
    </source>
</reference>
<feature type="signal peptide" evidence="2">
    <location>
        <begin position="1"/>
        <end position="18"/>
    </location>
</feature>
<feature type="chain" id="PRO_0000089615" description="Chorion protein S15">
    <location>
        <begin position="19"/>
        <end position="116"/>
    </location>
</feature>
<proteinExistence type="inferred from homology"/>
<dbReference type="EMBL" id="X53421">
    <property type="protein sequence ID" value="CAA37501.1"/>
    <property type="molecule type" value="Genomic_DNA"/>
</dbReference>
<dbReference type="EMBL" id="CH940647">
    <property type="protein sequence ID" value="EDW69113.1"/>
    <property type="molecule type" value="Genomic_DNA"/>
</dbReference>
<dbReference type="PIR" id="S06614">
    <property type="entry name" value="S06614"/>
</dbReference>
<dbReference type="RefSeq" id="XP_002046771.1">
    <property type="nucleotide sequence ID" value="XM_002046735.4"/>
</dbReference>
<dbReference type="FunCoup" id="P13424">
    <property type="interactions" value="3"/>
</dbReference>
<dbReference type="STRING" id="7244.P13424"/>
<dbReference type="EnsemblMetazoa" id="FBtr0228992">
    <property type="protein sequence ID" value="FBpp0227484"/>
    <property type="gene ID" value="FBgn0013068"/>
</dbReference>
<dbReference type="EnsemblMetazoa" id="XM_002046735.3">
    <property type="protein sequence ID" value="XP_002046771.1"/>
    <property type="gene ID" value="LOC6623252"/>
</dbReference>
<dbReference type="GeneID" id="6623252"/>
<dbReference type="KEGG" id="dvi:6623252"/>
<dbReference type="CTD" id="38999"/>
<dbReference type="eggNOG" id="ENOG502TBSK">
    <property type="taxonomic scope" value="Eukaryota"/>
</dbReference>
<dbReference type="HOGENOM" id="CLU_2075586_0_0_1"/>
<dbReference type="InParanoid" id="P13424"/>
<dbReference type="OMA" id="CINANPY"/>
<dbReference type="Proteomes" id="UP000008792">
    <property type="component" value="Unassembled WGS sequence"/>
</dbReference>
<dbReference type="GO" id="GO:0042600">
    <property type="term" value="C:egg chorion"/>
    <property type="evidence" value="ECO:0007669"/>
    <property type="project" value="InterPro"/>
</dbReference>
<dbReference type="GO" id="GO:0005576">
    <property type="term" value="C:extracellular region"/>
    <property type="evidence" value="ECO:0007669"/>
    <property type="project" value="UniProtKB-SubCell"/>
</dbReference>
<dbReference type="GO" id="GO:0007304">
    <property type="term" value="P:chorion-containing eggshell formation"/>
    <property type="evidence" value="ECO:0007669"/>
    <property type="project" value="EnsemblMetazoa"/>
</dbReference>
<dbReference type="InterPro" id="IPR005649">
    <property type="entry name" value="Chorion_2"/>
</dbReference>
<dbReference type="Pfam" id="PF03964">
    <property type="entry name" value="Chorion_2"/>
    <property type="match status" value="1"/>
</dbReference>
<sequence length="116" mass="11990">MKFLIAFAVLALVACINANPYGSNRGYEGGRVAYVQEVGYGGGSYGNQGYGNHGYGNRGYAQPLYSRSSNPSASAAAAAASAGIRPGRYEQAAVIGYDLDASYNGHSRGGYGRGGY</sequence>